<gene>
    <name evidence="1" type="primary">srp54</name>
    <name type="ordered locus">TK1486</name>
</gene>
<proteinExistence type="inferred from homology"/>
<name>SRP54_THEKO</name>
<dbReference type="EC" id="3.6.5.4" evidence="1"/>
<dbReference type="EMBL" id="AP006878">
    <property type="protein sequence ID" value="BAD85675.1"/>
    <property type="molecule type" value="Genomic_DNA"/>
</dbReference>
<dbReference type="RefSeq" id="WP_011250437.1">
    <property type="nucleotide sequence ID" value="NC_006624.1"/>
</dbReference>
<dbReference type="SMR" id="Q5JJC8"/>
<dbReference type="FunCoup" id="Q5JJC8">
    <property type="interactions" value="169"/>
</dbReference>
<dbReference type="STRING" id="69014.TK1486"/>
<dbReference type="EnsemblBacteria" id="BAD85675">
    <property type="protein sequence ID" value="BAD85675"/>
    <property type="gene ID" value="TK1486"/>
</dbReference>
<dbReference type="GeneID" id="78448009"/>
<dbReference type="KEGG" id="tko:TK1486"/>
<dbReference type="PATRIC" id="fig|69014.16.peg.1446"/>
<dbReference type="eggNOG" id="arCOG01228">
    <property type="taxonomic scope" value="Archaea"/>
</dbReference>
<dbReference type="HOGENOM" id="CLU_009301_6_1_2"/>
<dbReference type="InParanoid" id="Q5JJC8"/>
<dbReference type="OrthoDB" id="52849at2157"/>
<dbReference type="PhylomeDB" id="Q5JJC8"/>
<dbReference type="Proteomes" id="UP000000536">
    <property type="component" value="Chromosome"/>
</dbReference>
<dbReference type="GO" id="GO:0048500">
    <property type="term" value="C:signal recognition particle"/>
    <property type="evidence" value="ECO:0007669"/>
    <property type="project" value="UniProtKB-UniRule"/>
</dbReference>
<dbReference type="GO" id="GO:0008312">
    <property type="term" value="F:7S RNA binding"/>
    <property type="evidence" value="ECO:0007669"/>
    <property type="project" value="UniProtKB-UniRule"/>
</dbReference>
<dbReference type="GO" id="GO:0016887">
    <property type="term" value="F:ATP hydrolysis activity"/>
    <property type="evidence" value="ECO:0007669"/>
    <property type="project" value="InterPro"/>
</dbReference>
<dbReference type="GO" id="GO:0005525">
    <property type="term" value="F:GTP binding"/>
    <property type="evidence" value="ECO:0007669"/>
    <property type="project" value="UniProtKB-UniRule"/>
</dbReference>
<dbReference type="GO" id="GO:0003924">
    <property type="term" value="F:GTPase activity"/>
    <property type="evidence" value="ECO:0007669"/>
    <property type="project" value="UniProtKB-UniRule"/>
</dbReference>
<dbReference type="GO" id="GO:0006614">
    <property type="term" value="P:SRP-dependent cotranslational protein targeting to membrane"/>
    <property type="evidence" value="ECO:0007669"/>
    <property type="project" value="InterPro"/>
</dbReference>
<dbReference type="CDD" id="cd17875">
    <property type="entry name" value="SRP54_G"/>
    <property type="match status" value="1"/>
</dbReference>
<dbReference type="FunFam" id="3.40.50.300:FF:000022">
    <property type="entry name" value="Signal recognition particle 54 kDa subunit"/>
    <property type="match status" value="1"/>
</dbReference>
<dbReference type="FunFam" id="1.20.120.140:FF:000001">
    <property type="entry name" value="Signal recognition particle GTPase"/>
    <property type="match status" value="1"/>
</dbReference>
<dbReference type="Gene3D" id="3.40.50.300">
    <property type="entry name" value="P-loop containing nucleotide triphosphate hydrolases"/>
    <property type="match status" value="1"/>
</dbReference>
<dbReference type="Gene3D" id="1.20.120.140">
    <property type="entry name" value="Signal recognition particle SRP54, nucleotide-binding domain"/>
    <property type="match status" value="1"/>
</dbReference>
<dbReference type="Gene3D" id="1.10.260.30">
    <property type="entry name" value="Signal recognition particle, SRP54 subunit, M-domain"/>
    <property type="match status" value="1"/>
</dbReference>
<dbReference type="HAMAP" id="MF_00306">
    <property type="entry name" value="SRP54"/>
    <property type="match status" value="1"/>
</dbReference>
<dbReference type="InterPro" id="IPR003593">
    <property type="entry name" value="AAA+_ATPase"/>
</dbReference>
<dbReference type="InterPro" id="IPR027417">
    <property type="entry name" value="P-loop_NTPase"/>
</dbReference>
<dbReference type="InterPro" id="IPR036891">
    <property type="entry name" value="Signal_recog_part_SRP54_M_sf"/>
</dbReference>
<dbReference type="InterPro" id="IPR013822">
    <property type="entry name" value="Signal_recog_particl_SRP54_hlx"/>
</dbReference>
<dbReference type="InterPro" id="IPR004125">
    <property type="entry name" value="Signal_recog_particle_SRP54_M"/>
</dbReference>
<dbReference type="InterPro" id="IPR036225">
    <property type="entry name" value="SRP/SRP_N"/>
</dbReference>
<dbReference type="InterPro" id="IPR022941">
    <property type="entry name" value="SRP54"/>
</dbReference>
<dbReference type="InterPro" id="IPR000897">
    <property type="entry name" value="SRP54_GTPase_dom"/>
</dbReference>
<dbReference type="InterPro" id="IPR042101">
    <property type="entry name" value="SRP54_N_sf"/>
</dbReference>
<dbReference type="PANTHER" id="PTHR11564">
    <property type="entry name" value="SIGNAL RECOGNITION PARTICLE 54K PROTEIN SRP54"/>
    <property type="match status" value="1"/>
</dbReference>
<dbReference type="PANTHER" id="PTHR11564:SF5">
    <property type="entry name" value="SIGNAL RECOGNITION PARTICLE SUBUNIT SRP54"/>
    <property type="match status" value="1"/>
</dbReference>
<dbReference type="Pfam" id="PF00448">
    <property type="entry name" value="SRP54"/>
    <property type="match status" value="1"/>
</dbReference>
<dbReference type="Pfam" id="PF02881">
    <property type="entry name" value="SRP54_N"/>
    <property type="match status" value="1"/>
</dbReference>
<dbReference type="Pfam" id="PF02978">
    <property type="entry name" value="SRP_SPB"/>
    <property type="match status" value="1"/>
</dbReference>
<dbReference type="SMART" id="SM00382">
    <property type="entry name" value="AAA"/>
    <property type="match status" value="1"/>
</dbReference>
<dbReference type="SMART" id="SM00962">
    <property type="entry name" value="SRP54"/>
    <property type="match status" value="1"/>
</dbReference>
<dbReference type="SMART" id="SM00963">
    <property type="entry name" value="SRP54_N"/>
    <property type="match status" value="1"/>
</dbReference>
<dbReference type="SUPFAM" id="SSF47364">
    <property type="entry name" value="Domain of the SRP/SRP receptor G-proteins"/>
    <property type="match status" value="1"/>
</dbReference>
<dbReference type="SUPFAM" id="SSF52540">
    <property type="entry name" value="P-loop containing nucleoside triphosphate hydrolases"/>
    <property type="match status" value="1"/>
</dbReference>
<dbReference type="SUPFAM" id="SSF47446">
    <property type="entry name" value="Signal peptide-binding domain"/>
    <property type="match status" value="1"/>
</dbReference>
<dbReference type="PROSITE" id="PS00300">
    <property type="entry name" value="SRP54"/>
    <property type="match status" value="1"/>
</dbReference>
<reference key="1">
    <citation type="journal article" date="2005" name="Genome Res.">
        <title>Complete genome sequence of the hyperthermophilic archaeon Thermococcus kodakaraensis KOD1 and comparison with Pyrococcus genomes.</title>
        <authorList>
            <person name="Fukui T."/>
            <person name="Atomi H."/>
            <person name="Kanai T."/>
            <person name="Matsumi R."/>
            <person name="Fujiwara S."/>
            <person name="Imanaka T."/>
        </authorList>
    </citation>
    <scope>NUCLEOTIDE SEQUENCE [LARGE SCALE GENOMIC DNA]</scope>
    <source>
        <strain>ATCC BAA-918 / JCM 12380 / KOD1</strain>
    </source>
</reference>
<keyword id="KW-0963">Cytoplasm</keyword>
<keyword id="KW-0342">GTP-binding</keyword>
<keyword id="KW-0378">Hydrolase</keyword>
<keyword id="KW-0547">Nucleotide-binding</keyword>
<keyword id="KW-1185">Reference proteome</keyword>
<keyword id="KW-0687">Ribonucleoprotein</keyword>
<keyword id="KW-0694">RNA-binding</keyword>
<keyword id="KW-0733">Signal recognition particle</keyword>
<organism>
    <name type="scientific">Thermococcus kodakarensis (strain ATCC BAA-918 / JCM 12380 / KOD1)</name>
    <name type="common">Pyrococcus kodakaraensis (strain KOD1)</name>
    <dbReference type="NCBI Taxonomy" id="69014"/>
    <lineage>
        <taxon>Archaea</taxon>
        <taxon>Methanobacteriati</taxon>
        <taxon>Methanobacteriota</taxon>
        <taxon>Thermococci</taxon>
        <taxon>Thermococcales</taxon>
        <taxon>Thermococcaceae</taxon>
        <taxon>Thermococcus</taxon>
    </lineage>
</organism>
<comment type="function">
    <text evidence="1">Involved in targeting and insertion of nascent membrane proteins into the cytoplasmic membrane. Binds to the hydrophobic signal sequence of the ribosome-nascent chain (RNC) as it emerges from the ribosomes. The SRP-RNC complex is then targeted to the cytoplasmic membrane where it interacts with the SRP receptor FtsY.</text>
</comment>
<comment type="catalytic activity">
    <reaction evidence="1">
        <text>GTP + H2O = GDP + phosphate + H(+)</text>
        <dbReference type="Rhea" id="RHEA:19669"/>
        <dbReference type="ChEBI" id="CHEBI:15377"/>
        <dbReference type="ChEBI" id="CHEBI:15378"/>
        <dbReference type="ChEBI" id="CHEBI:37565"/>
        <dbReference type="ChEBI" id="CHEBI:43474"/>
        <dbReference type="ChEBI" id="CHEBI:58189"/>
        <dbReference type="EC" id="3.6.5.4"/>
    </reaction>
</comment>
<comment type="subunit">
    <text evidence="1">Part of the signal recognition particle protein translocation system, which is composed of SRP and FtsY. Archaeal SRP consists of a 7S RNA molecule of 300 nucleotides and two protein subunits: SRP54 and SRP19.</text>
</comment>
<comment type="subcellular location">
    <subcellularLocation>
        <location evidence="1">Cytoplasm</location>
    </subcellularLocation>
    <text evidence="1">The SRP-RNC complex is targeted to the cytoplasmic membrane.</text>
</comment>
<comment type="domain">
    <text evidence="1">Composed of three domains: the N-terminal N domain, which is responsible for interactions with the ribosome, the central G domain, which binds GTP, and the C-terminal M domain, which binds the RNA and the signal sequence of the RNC.</text>
</comment>
<comment type="similarity">
    <text evidence="1">Belongs to the GTP-binding SRP family. SRP54 subfamily.</text>
</comment>
<accession>Q5JJC8</accession>
<feature type="chain" id="PRO_0000101185" description="Signal recognition particle 54 kDa protein">
    <location>
        <begin position="1"/>
        <end position="448"/>
    </location>
</feature>
<feature type="binding site" evidence="1">
    <location>
        <begin position="107"/>
        <end position="114"/>
    </location>
    <ligand>
        <name>GTP</name>
        <dbReference type="ChEBI" id="CHEBI:37565"/>
    </ligand>
</feature>
<feature type="binding site" evidence="1">
    <location>
        <begin position="189"/>
        <end position="193"/>
    </location>
    <ligand>
        <name>GTP</name>
        <dbReference type="ChEBI" id="CHEBI:37565"/>
    </ligand>
</feature>
<feature type="binding site" evidence="1">
    <location>
        <begin position="247"/>
        <end position="250"/>
    </location>
    <ligand>
        <name>GTP</name>
        <dbReference type="ChEBI" id="CHEBI:37565"/>
    </ligand>
</feature>
<protein>
    <recommendedName>
        <fullName evidence="1">Signal recognition particle 54 kDa protein</fullName>
        <shortName evidence="1">SRP54</shortName>
        <ecNumber evidence="1">3.6.5.4</ecNumber>
    </recommendedName>
</protein>
<sequence>MALEKLGQALNSALKKLARSSTVDEATIKEIVRDIQRALLQADVNVKLVLQLTKQIQKRALEEEPPAGVSKKEHIIKIVYEELTKFLGTEAKPLEIKHKPTVILTVGIQGSGKTTSVAKLARYLQKRGYKVGVVCSDTWRPGAYYQLRQLLDPFGIEVFGDPEEKDAVKLAREGVEHFREKGVDVIIVDSAGRHKEEKGLIEEMRQISEAIKPHEVILVIDGTIGQQAYNQAMAFKEATPIGSIIVTKLDGSAKGGGALSAVAATGAPIKFIGTGERIDDLEPFDPKRFVSRLLGLGDIQGLLEKIEELQKEQEFREEDMEKFLRGKFNLKDMYAQLEAMQKMGPLKQILQMIPGLGYSLPEDAVRVGEEKLKRYKVIMDSMTEEELENPEIINYSRIKRIARGSGATTAEVRELLNQYNQMKKMFKSLNKRKLAKMAKKFNFGGLGI</sequence>
<evidence type="ECO:0000255" key="1">
    <source>
        <dbReference type="HAMAP-Rule" id="MF_00306"/>
    </source>
</evidence>